<dbReference type="EC" id="4.2.1.70" evidence="1"/>
<dbReference type="EMBL" id="CP000916">
    <property type="protein sequence ID" value="ACM23205.1"/>
    <property type="molecule type" value="Genomic_DNA"/>
</dbReference>
<dbReference type="RefSeq" id="WP_015919521.1">
    <property type="nucleotide sequence ID" value="NC_011978.1"/>
</dbReference>
<dbReference type="SMR" id="B9K8C2"/>
<dbReference type="STRING" id="309803.CTN_1029"/>
<dbReference type="KEGG" id="tna:CTN_1029"/>
<dbReference type="eggNOG" id="COG2313">
    <property type="taxonomic scope" value="Bacteria"/>
</dbReference>
<dbReference type="HOGENOM" id="CLU_012201_0_1_0"/>
<dbReference type="Proteomes" id="UP000000445">
    <property type="component" value="Chromosome"/>
</dbReference>
<dbReference type="GO" id="GO:0005737">
    <property type="term" value="C:cytoplasm"/>
    <property type="evidence" value="ECO:0007669"/>
    <property type="project" value="TreeGrafter"/>
</dbReference>
<dbReference type="GO" id="GO:0016798">
    <property type="term" value="F:hydrolase activity, acting on glycosyl bonds"/>
    <property type="evidence" value="ECO:0007669"/>
    <property type="project" value="UniProtKB-KW"/>
</dbReference>
<dbReference type="GO" id="GO:0046872">
    <property type="term" value="F:metal ion binding"/>
    <property type="evidence" value="ECO:0007669"/>
    <property type="project" value="UniProtKB-KW"/>
</dbReference>
<dbReference type="GO" id="GO:0004730">
    <property type="term" value="F:pseudouridylate synthase activity"/>
    <property type="evidence" value="ECO:0007669"/>
    <property type="project" value="UniProtKB-UniRule"/>
</dbReference>
<dbReference type="GO" id="GO:0046113">
    <property type="term" value="P:nucleobase catabolic process"/>
    <property type="evidence" value="ECO:0007669"/>
    <property type="project" value="UniProtKB-UniRule"/>
</dbReference>
<dbReference type="Gene3D" id="3.40.1790.10">
    <property type="entry name" value="Indigoidine synthase domain"/>
    <property type="match status" value="1"/>
</dbReference>
<dbReference type="HAMAP" id="MF_01876">
    <property type="entry name" value="PsiMP_glycosidase"/>
    <property type="match status" value="1"/>
</dbReference>
<dbReference type="InterPro" id="IPR022830">
    <property type="entry name" value="Indigdn_synthA-like"/>
</dbReference>
<dbReference type="InterPro" id="IPR007342">
    <property type="entry name" value="PsuG"/>
</dbReference>
<dbReference type="PANTHER" id="PTHR42909:SF1">
    <property type="entry name" value="CARBOHYDRATE KINASE PFKB DOMAIN-CONTAINING PROTEIN"/>
    <property type="match status" value="1"/>
</dbReference>
<dbReference type="PANTHER" id="PTHR42909">
    <property type="entry name" value="ZGC:136858"/>
    <property type="match status" value="1"/>
</dbReference>
<dbReference type="Pfam" id="PF04227">
    <property type="entry name" value="Indigoidine_A"/>
    <property type="match status" value="1"/>
</dbReference>
<dbReference type="SUPFAM" id="SSF110581">
    <property type="entry name" value="Indigoidine synthase A-like"/>
    <property type="match status" value="1"/>
</dbReference>
<name>PSUG_THENN</name>
<accession>B9K8C2</accession>
<reference key="1">
    <citation type="submission" date="2007-11" db="EMBL/GenBank/DDBJ databases">
        <title>The genome sequence of the hyperthermophilic bacterium Thermotoga neapolitana.</title>
        <authorList>
            <person name="Lim S.K."/>
            <person name="Kim J.S."/>
            <person name="Cha S.H."/>
            <person name="Park B.C."/>
            <person name="Lee D.S."/>
            <person name="Tae H.S."/>
            <person name="Kim S.-J."/>
            <person name="Kim J.J."/>
            <person name="Park K.J."/>
            <person name="Lee S.Y."/>
        </authorList>
    </citation>
    <scope>NUCLEOTIDE SEQUENCE [LARGE SCALE GENOMIC DNA]</scope>
    <source>
        <strain>ATCC 49049 / DSM 4359 / NBRC 107923 / NS-E</strain>
    </source>
</reference>
<feature type="chain" id="PRO_0000390556" description="Pseudouridine-5'-phosphate glycosidase">
    <location>
        <begin position="1"/>
        <end position="284"/>
    </location>
</feature>
<feature type="active site" description="Proton donor" evidence="1">
    <location>
        <position position="17"/>
    </location>
</feature>
<feature type="active site" description="Nucleophile" evidence="1">
    <location>
        <position position="147"/>
    </location>
</feature>
<feature type="binding site" evidence="1">
    <location>
        <position position="77"/>
    </location>
    <ligand>
        <name>substrate</name>
    </ligand>
</feature>
<feature type="binding site" evidence="1">
    <location>
        <position position="97"/>
    </location>
    <ligand>
        <name>substrate</name>
    </ligand>
</feature>
<feature type="binding site" evidence="1">
    <location>
        <position position="126"/>
    </location>
    <ligand>
        <name>Mn(2+)</name>
        <dbReference type="ChEBI" id="CHEBI:29035"/>
    </ligand>
</feature>
<feature type="binding site" evidence="1">
    <location>
        <begin position="128"/>
        <end position="130"/>
    </location>
    <ligand>
        <name>substrate</name>
    </ligand>
</feature>
<evidence type="ECO:0000255" key="1">
    <source>
        <dbReference type="HAMAP-Rule" id="MF_01876"/>
    </source>
</evidence>
<protein>
    <recommendedName>
        <fullName evidence="1">Pseudouridine-5'-phosphate glycosidase</fullName>
        <shortName evidence="1">PsiMP glycosidase</shortName>
        <ecNumber evidence="1">4.2.1.70</ecNumber>
    </recommendedName>
</protein>
<organism>
    <name type="scientific">Thermotoga neapolitana (strain ATCC 49049 / DSM 4359 / NBRC 107923 / NS-E)</name>
    <dbReference type="NCBI Taxonomy" id="309803"/>
    <lineage>
        <taxon>Bacteria</taxon>
        <taxon>Thermotogati</taxon>
        <taxon>Thermotogota</taxon>
        <taxon>Thermotogae</taxon>
        <taxon>Thermotogales</taxon>
        <taxon>Thermotogaceae</taxon>
        <taxon>Thermotoga</taxon>
    </lineage>
</organism>
<comment type="function">
    <text evidence="1">Catalyzes the reversible cleavage of pseudouridine 5'-phosphate (PsiMP) to ribose 5-phosphate and uracil. Functions biologically in the cleavage direction, as part of a pseudouridine degradation pathway.</text>
</comment>
<comment type="catalytic activity">
    <reaction evidence="1">
        <text>D-ribose 5-phosphate + uracil = psi-UMP + H2O</text>
        <dbReference type="Rhea" id="RHEA:18337"/>
        <dbReference type="ChEBI" id="CHEBI:15377"/>
        <dbReference type="ChEBI" id="CHEBI:17568"/>
        <dbReference type="ChEBI" id="CHEBI:58380"/>
        <dbReference type="ChEBI" id="CHEBI:78346"/>
        <dbReference type="EC" id="4.2.1.70"/>
    </reaction>
</comment>
<comment type="cofactor">
    <cofactor evidence="1">
        <name>Mn(2+)</name>
        <dbReference type="ChEBI" id="CHEBI:29035"/>
    </cofactor>
    <text evidence="1">Binds 1 Mn(2+) ion per subunit.</text>
</comment>
<comment type="subunit">
    <text evidence="1">Homotrimer.</text>
</comment>
<comment type="similarity">
    <text evidence="1">Belongs to the pseudouridine-5'-phosphate glycosidase family.</text>
</comment>
<proteinExistence type="inferred from homology"/>
<keyword id="KW-0326">Glycosidase</keyword>
<keyword id="KW-0378">Hydrolase</keyword>
<keyword id="KW-0456">Lyase</keyword>
<keyword id="KW-0464">Manganese</keyword>
<keyword id="KW-0479">Metal-binding</keyword>
<sequence>MVVENRLEKEKPAVGMETTVFVHGLPRKEAIELFRKAKKISEEMGFQLAVVGVLKGKIILGMNEDELTIMMNEGSEKIGTREIPIALAKGMNAATTVSATIFLCKRFGIDVVVTGGTGGVHPGGVDISQDLTEMASSRIILVSSGIKSILDVDATFEMLETLEIPVVGFMTDEFPLFFSRKSGKKVKRVENVEEILRIYRTMEELKLEKTLMVLNPVPEEHEVPREEIEHLLENIELKVEGKDVTPYLLRKLVEITGGRTLKANLSLLEENVKLAGKIALALGR</sequence>
<gene>
    <name evidence="1" type="primary">psuG</name>
    <name type="ordered locus">CTN_1029</name>
</gene>